<organism>
    <name type="scientific">Bacillus anthracis (strain CDC 684 / NRRL 3495)</name>
    <dbReference type="NCBI Taxonomy" id="568206"/>
    <lineage>
        <taxon>Bacteria</taxon>
        <taxon>Bacillati</taxon>
        <taxon>Bacillota</taxon>
        <taxon>Bacilli</taxon>
        <taxon>Bacillales</taxon>
        <taxon>Bacillaceae</taxon>
        <taxon>Bacillus</taxon>
        <taxon>Bacillus cereus group</taxon>
    </lineage>
</organism>
<protein>
    <recommendedName>
        <fullName evidence="1">Sec-independent protein translocase protein TatA</fullName>
    </recommendedName>
</protein>
<sequence>MFSNIGFPGLILILVAVLILFGPKKLPEIGKALGETLKEFKKSTKELTDDAFQEKEKKEKM</sequence>
<gene>
    <name evidence="1" type="primary">tatA</name>
    <name type="ordered locus">BAMEG_2352</name>
</gene>
<accession>C3LJM3</accession>
<reference key="1">
    <citation type="submission" date="2008-10" db="EMBL/GenBank/DDBJ databases">
        <title>Genome sequence of Bacillus anthracis str. CDC 684.</title>
        <authorList>
            <person name="Dodson R.J."/>
            <person name="Munk A.C."/>
            <person name="Brettin T."/>
            <person name="Bruce D."/>
            <person name="Detter C."/>
            <person name="Tapia R."/>
            <person name="Han C."/>
            <person name="Sutton G."/>
            <person name="Sims D."/>
        </authorList>
    </citation>
    <scope>NUCLEOTIDE SEQUENCE [LARGE SCALE GENOMIC DNA]</scope>
    <source>
        <strain>CDC 684 / NRRL 3495</strain>
    </source>
</reference>
<feature type="chain" id="PRO_1000125187" description="Sec-independent protein translocase protein TatA">
    <location>
        <begin position="1"/>
        <end position="61"/>
    </location>
</feature>
<feature type="transmembrane region" description="Helical" evidence="1">
    <location>
        <begin position="1"/>
        <end position="21"/>
    </location>
</feature>
<name>TATA_BACAC</name>
<proteinExistence type="inferred from homology"/>
<dbReference type="EMBL" id="CP001215">
    <property type="protein sequence ID" value="ACP17208.1"/>
    <property type="molecule type" value="Genomic_DNA"/>
</dbReference>
<dbReference type="RefSeq" id="WP_000492443.1">
    <property type="nucleotide sequence ID" value="NC_012581.1"/>
</dbReference>
<dbReference type="SMR" id="C3LJM3"/>
<dbReference type="KEGG" id="bah:BAMEG_2352"/>
<dbReference type="HOGENOM" id="CLU_086034_6_0_9"/>
<dbReference type="GO" id="GO:0033281">
    <property type="term" value="C:TAT protein transport complex"/>
    <property type="evidence" value="ECO:0007669"/>
    <property type="project" value="UniProtKB-UniRule"/>
</dbReference>
<dbReference type="GO" id="GO:0008320">
    <property type="term" value="F:protein transmembrane transporter activity"/>
    <property type="evidence" value="ECO:0007669"/>
    <property type="project" value="UniProtKB-UniRule"/>
</dbReference>
<dbReference type="GO" id="GO:0043953">
    <property type="term" value="P:protein transport by the Tat complex"/>
    <property type="evidence" value="ECO:0007669"/>
    <property type="project" value="UniProtKB-UniRule"/>
</dbReference>
<dbReference type="Gene3D" id="1.20.5.3310">
    <property type="match status" value="1"/>
</dbReference>
<dbReference type="HAMAP" id="MF_00236">
    <property type="entry name" value="TatA_E"/>
    <property type="match status" value="1"/>
</dbReference>
<dbReference type="InterPro" id="IPR003369">
    <property type="entry name" value="TatA/B/E"/>
</dbReference>
<dbReference type="InterPro" id="IPR006312">
    <property type="entry name" value="TatA/E"/>
</dbReference>
<dbReference type="NCBIfam" id="NF011430">
    <property type="entry name" value="PRK14861.1"/>
    <property type="match status" value="1"/>
</dbReference>
<dbReference type="NCBIfam" id="TIGR01411">
    <property type="entry name" value="tatAE"/>
    <property type="match status" value="1"/>
</dbReference>
<dbReference type="PANTHER" id="PTHR42982">
    <property type="entry name" value="SEC-INDEPENDENT PROTEIN TRANSLOCASE PROTEIN TATA"/>
    <property type="match status" value="1"/>
</dbReference>
<dbReference type="PANTHER" id="PTHR42982:SF1">
    <property type="entry name" value="SEC-INDEPENDENT PROTEIN TRANSLOCASE PROTEIN TATA"/>
    <property type="match status" value="1"/>
</dbReference>
<dbReference type="Pfam" id="PF02416">
    <property type="entry name" value="TatA_B_E"/>
    <property type="match status" value="1"/>
</dbReference>
<dbReference type="PRINTS" id="PR01506">
    <property type="entry name" value="TATBPROTEIN"/>
</dbReference>
<keyword id="KW-1003">Cell membrane</keyword>
<keyword id="KW-0472">Membrane</keyword>
<keyword id="KW-0653">Protein transport</keyword>
<keyword id="KW-0811">Translocation</keyword>
<keyword id="KW-0812">Transmembrane</keyword>
<keyword id="KW-1133">Transmembrane helix</keyword>
<keyword id="KW-0813">Transport</keyword>
<evidence type="ECO:0000255" key="1">
    <source>
        <dbReference type="HAMAP-Rule" id="MF_00236"/>
    </source>
</evidence>
<comment type="function">
    <text evidence="1">Part of the twin-arginine translocation (Tat) system that transports large folded proteins containing a characteristic twin-arginine motif in their signal peptide across membranes. TatA could form the protein-conducting channel of the Tat system.</text>
</comment>
<comment type="subunit">
    <text evidence="1">Forms a complex with TatC.</text>
</comment>
<comment type="subcellular location">
    <subcellularLocation>
        <location evidence="1">Cell membrane</location>
        <topology evidence="1">Single-pass membrane protein</topology>
    </subcellularLocation>
</comment>
<comment type="similarity">
    <text evidence="1">Belongs to the TatA/E family.</text>
</comment>